<comment type="function">
    <text evidence="1">Involved in cell division and chromosome segregation.</text>
</comment>
<comment type="similarity">
    <text evidence="1">Belongs to the WhiA family.</text>
</comment>
<feature type="chain" id="PRO_0000376509" description="Probable cell division protein WhiA">
    <location>
        <begin position="1"/>
        <end position="305"/>
    </location>
</feature>
<feature type="DNA-binding region" description="H-T-H motif" evidence="1">
    <location>
        <begin position="269"/>
        <end position="302"/>
    </location>
</feature>
<name>WHIA_LACLS</name>
<organism>
    <name type="scientific">Lactococcus lactis subsp. cremoris (strain SK11)</name>
    <dbReference type="NCBI Taxonomy" id="272622"/>
    <lineage>
        <taxon>Bacteria</taxon>
        <taxon>Bacillati</taxon>
        <taxon>Bacillota</taxon>
        <taxon>Bacilli</taxon>
        <taxon>Lactobacillales</taxon>
        <taxon>Streptococcaceae</taxon>
        <taxon>Lactococcus</taxon>
        <taxon>Lactococcus cremoris subsp. cremoris</taxon>
    </lineage>
</organism>
<protein>
    <recommendedName>
        <fullName evidence="1">Probable cell division protein WhiA</fullName>
    </recommendedName>
</protein>
<evidence type="ECO:0000255" key="1">
    <source>
        <dbReference type="HAMAP-Rule" id="MF_01420"/>
    </source>
</evidence>
<sequence length="305" mass="34548">MSFTSDVKKELTRNLATTGALLALVRMNGSVGIFNGLTLSITTENAGTAKYIYQMLQELYEIHAEIRVHQKTTLSKNRVYTVFITEGAGELLDELSLADSLMLDNGVPEFVKNDEFIKKDYLRGAFLSAGALHNPEKGEYQLSIANVYQEHAEDLQEIFRDFGLNARVIERKNRWILYLSKAEEIMDFLTLIGAMKARLKFEEAKIMREMRGLANRQSNFENANIAKSVMAAQEAIDAIQFLNEKKELEQLPPSLKEIARLRLENPEATIKELGELLDPPLGKSGVNHRLRKLVERSNDLKKVES</sequence>
<keyword id="KW-0131">Cell cycle</keyword>
<keyword id="KW-0132">Cell division</keyword>
<keyword id="KW-0238">DNA-binding</keyword>
<gene>
    <name evidence="1" type="primary">whiA</name>
    <name type="ordered locus">LACR_1049</name>
</gene>
<dbReference type="EMBL" id="CP000425">
    <property type="protein sequence ID" value="ABJ72586.1"/>
    <property type="molecule type" value="Genomic_DNA"/>
</dbReference>
<dbReference type="RefSeq" id="WP_011675974.1">
    <property type="nucleotide sequence ID" value="NC_008527.1"/>
</dbReference>
<dbReference type="SMR" id="Q02ZN6"/>
<dbReference type="GeneID" id="61109269"/>
<dbReference type="KEGG" id="llc:LACR_1049"/>
<dbReference type="HOGENOM" id="CLU_053282_0_0_9"/>
<dbReference type="Proteomes" id="UP000000240">
    <property type="component" value="Chromosome"/>
</dbReference>
<dbReference type="GO" id="GO:0003677">
    <property type="term" value="F:DNA binding"/>
    <property type="evidence" value="ECO:0007669"/>
    <property type="project" value="UniProtKB-UniRule"/>
</dbReference>
<dbReference type="GO" id="GO:0004519">
    <property type="term" value="F:endonuclease activity"/>
    <property type="evidence" value="ECO:0007669"/>
    <property type="project" value="InterPro"/>
</dbReference>
<dbReference type="GO" id="GO:0051301">
    <property type="term" value="P:cell division"/>
    <property type="evidence" value="ECO:0007669"/>
    <property type="project" value="UniProtKB-UniRule"/>
</dbReference>
<dbReference type="GO" id="GO:0043937">
    <property type="term" value="P:regulation of sporulation"/>
    <property type="evidence" value="ECO:0007669"/>
    <property type="project" value="InterPro"/>
</dbReference>
<dbReference type="Gene3D" id="3.10.28.10">
    <property type="entry name" value="Homing endonucleases"/>
    <property type="match status" value="1"/>
</dbReference>
<dbReference type="HAMAP" id="MF_01420">
    <property type="entry name" value="HTH_type_WhiA"/>
    <property type="match status" value="1"/>
</dbReference>
<dbReference type="InterPro" id="IPR027434">
    <property type="entry name" value="Homing_endonucl"/>
</dbReference>
<dbReference type="InterPro" id="IPR004042">
    <property type="entry name" value="Intein_endonuc_central"/>
</dbReference>
<dbReference type="InterPro" id="IPR018478">
    <property type="entry name" value="Sporu_reg_WhiA_N_dom"/>
</dbReference>
<dbReference type="InterPro" id="IPR003802">
    <property type="entry name" value="Sporulation_regulator_WhiA"/>
</dbReference>
<dbReference type="InterPro" id="IPR023054">
    <property type="entry name" value="Sporulation_regulator_WhiA_C"/>
</dbReference>
<dbReference type="InterPro" id="IPR039518">
    <property type="entry name" value="WhiA_LAGLIDADG_dom"/>
</dbReference>
<dbReference type="NCBIfam" id="TIGR00647">
    <property type="entry name" value="DNA_bind_WhiA"/>
    <property type="match status" value="1"/>
</dbReference>
<dbReference type="PANTHER" id="PTHR37307">
    <property type="entry name" value="CELL DIVISION PROTEIN WHIA-RELATED"/>
    <property type="match status" value="1"/>
</dbReference>
<dbReference type="PANTHER" id="PTHR37307:SF1">
    <property type="entry name" value="CELL DIVISION PROTEIN WHIA-RELATED"/>
    <property type="match status" value="1"/>
</dbReference>
<dbReference type="Pfam" id="PF02650">
    <property type="entry name" value="HTH_WhiA"/>
    <property type="match status" value="1"/>
</dbReference>
<dbReference type="Pfam" id="PF14527">
    <property type="entry name" value="LAGLIDADG_WhiA"/>
    <property type="match status" value="1"/>
</dbReference>
<dbReference type="Pfam" id="PF10298">
    <property type="entry name" value="WhiA_N"/>
    <property type="match status" value="1"/>
</dbReference>
<dbReference type="SUPFAM" id="SSF55608">
    <property type="entry name" value="Homing endonucleases"/>
    <property type="match status" value="1"/>
</dbReference>
<dbReference type="PROSITE" id="PS50819">
    <property type="entry name" value="INTEIN_ENDONUCLEASE"/>
    <property type="match status" value="1"/>
</dbReference>
<proteinExistence type="inferred from homology"/>
<reference key="1">
    <citation type="journal article" date="2006" name="Proc. Natl. Acad. Sci. U.S.A.">
        <title>Comparative genomics of the lactic acid bacteria.</title>
        <authorList>
            <person name="Makarova K.S."/>
            <person name="Slesarev A."/>
            <person name="Wolf Y.I."/>
            <person name="Sorokin A."/>
            <person name="Mirkin B."/>
            <person name="Koonin E.V."/>
            <person name="Pavlov A."/>
            <person name="Pavlova N."/>
            <person name="Karamychev V."/>
            <person name="Polouchine N."/>
            <person name="Shakhova V."/>
            <person name="Grigoriev I."/>
            <person name="Lou Y."/>
            <person name="Rohksar D."/>
            <person name="Lucas S."/>
            <person name="Huang K."/>
            <person name="Goodstein D.M."/>
            <person name="Hawkins T."/>
            <person name="Plengvidhya V."/>
            <person name="Welker D."/>
            <person name="Hughes J."/>
            <person name="Goh Y."/>
            <person name="Benson A."/>
            <person name="Baldwin K."/>
            <person name="Lee J.-H."/>
            <person name="Diaz-Muniz I."/>
            <person name="Dosti B."/>
            <person name="Smeianov V."/>
            <person name="Wechter W."/>
            <person name="Barabote R."/>
            <person name="Lorca G."/>
            <person name="Altermann E."/>
            <person name="Barrangou R."/>
            <person name="Ganesan B."/>
            <person name="Xie Y."/>
            <person name="Rawsthorne H."/>
            <person name="Tamir D."/>
            <person name="Parker C."/>
            <person name="Breidt F."/>
            <person name="Broadbent J.R."/>
            <person name="Hutkins R."/>
            <person name="O'Sullivan D."/>
            <person name="Steele J."/>
            <person name="Unlu G."/>
            <person name="Saier M.H. Jr."/>
            <person name="Klaenhammer T."/>
            <person name="Richardson P."/>
            <person name="Kozyavkin S."/>
            <person name="Weimer B.C."/>
            <person name="Mills D.A."/>
        </authorList>
    </citation>
    <scope>NUCLEOTIDE SEQUENCE [LARGE SCALE GENOMIC DNA]</scope>
    <source>
        <strain>SK11</strain>
    </source>
</reference>
<accession>Q02ZN6</accession>